<evidence type="ECO:0000250" key="1">
    <source>
        <dbReference type="UniProtKB" id="Q5QE80"/>
    </source>
</evidence>
<evidence type="ECO:0000255" key="2">
    <source>
        <dbReference type="PROSITE-ProRule" id="PRU00465"/>
    </source>
</evidence>
<evidence type="ECO:0000255" key="3">
    <source>
        <dbReference type="PROSITE-ProRule" id="PRU00718"/>
    </source>
</evidence>
<evidence type="ECO:0000269" key="4">
    <source>
    </source>
</evidence>
<evidence type="ECO:0000269" key="5">
    <source>
    </source>
</evidence>
<evidence type="ECO:0000269" key="6">
    <source>
    </source>
</evidence>
<evidence type="ECO:0000269" key="7">
    <source>
    </source>
</evidence>
<evidence type="ECO:0000269" key="8">
    <source>
    </source>
</evidence>
<evidence type="ECO:0000305" key="9"/>
<evidence type="ECO:0000305" key="10">
    <source>
    </source>
</evidence>
<evidence type="ECO:0000305" key="11">
    <source>
    </source>
</evidence>
<evidence type="ECO:0007829" key="12">
    <source>
        <dbReference type="PDB" id="3ZYV"/>
    </source>
</evidence>
<sequence>MSPSKESDELIFFVNGKKVTERNADPEVNLLFYLRKVIRLTGTKYGCGGGDCGACTVMISRYDPISKRISHFSATACLVPICSLHGAAVTTVEGIGSTKTRIHPVQERIAKGHGTQCGFCTPGMVMSIYTLLRNHPEPSTEQIMETLGGNLCRCTGYRPIVESAKSFCPSSTCCQMNGEGKCCLDEEKNEPERKNSVCTKLYEKKEFQPLDPTQELIFPPELMRMAEESQNTVLTFRGERTTWIAPGTLNDLLELKMKHPSAPLVIGNTYLGLHMKFTDVSYPIIISPARILELFVVTNTKQGLTLGAGLSLTQVKNVLSDVVSRLPKEKTQIYCALLKQLKTLAGQQIRNVASLGGHIISRLPTSDLNPILGIGNCILNVASTEGIQQIPLNDHFLAGVPDAILKPEQVLISVFVPRSSKWEFVSAFRQAPRQQNAFATVNAGMKVVFKEDTNTITDLGILYGGIGATVISADKSCRQLIGRCWDEEMLDDAGKMICEEVSLLMAAPGGMEEYRKTLAISFLFMFYLDVLKQLKTRDPHKYPDISQKLLHILEDFPLTMPYGMQSFQDVDFQQPLQDPIGRPIMHQSGIKHATGEAVFCDDMSVLPGELFLAVVTSSKSHAKIISLDASEALASLGVVDVVTARDVPGDNGREEESLYAQDEVICVGQIVCAVAADSYAHAQQAAKKVKIVYQDIEPMIVTVQDALQYESFIGPERKLEQGNVEEAFQCADQILEGEVHLGGQEHFYMETQSVRVVPKGEDKEMDIYVSSQDAAFTQEMVARTLGIPKNRINCHVKRVGGAFGGKASKPGLLASVAAVAAQKTGRPIRFILERRDDMLITGGRHPLLGKYKIGFMNNGKIKAADIQLYINGGCTPDDSELVIEYALLKLENAYKIPNLRVRGRVCKTNLPSNTAFRGFGFPQGAFVTETCMSAVAAKCRLPPEKVRELNMYRTIDRTIHNQEFDPTNLLQCWEACVENSSYYNRKKAVDEFNQQRFWKKRGIAIIPMKFSVGFPKTFYYQAAALVQIYTDGSVLVAHGGVELGQGINTKMIQVASRELKIPMSYIHLDEMSTVTVPNTVTTGASTGADVNGRAVQNACQILMKRLEPIIKQNPSGTWEEWVKEAFVQSISLSATGYFRGYQADMDWEKGEGDIFPYFVFGAACSEVEIDCLTGAHKNIRTDIVMDGSFSINPAVDIGQIEGAFVQGLGLYTLEELKYSPEGVLYTRGPHQYKIASVTDIPEEFHVSLLTPTPNPKAIYSSKGLGEAGTFLGCSVFFAIAAAVAAAREERGLSPIWAINSPATAEVIRMACEDQFTNLVPQTDSKCCKPWSIPVA</sequence>
<accession>G3X982</accession>
<accession>B2RSI5</accession>
<accession>Q8VI15</accession>
<dbReference type="EC" id="1.2.3.1" evidence="4 7 8"/>
<dbReference type="EC" id="1.17.3.-"/>
<dbReference type="EMBL" id="AF322178">
    <property type="protein sequence ID" value="AAL36596.1"/>
    <property type="molecule type" value="Genomic_DNA"/>
</dbReference>
<dbReference type="EMBL" id="AF322144">
    <property type="protein sequence ID" value="AAL36596.1"/>
    <property type="status" value="JOINED"/>
    <property type="molecule type" value="Genomic_DNA"/>
</dbReference>
<dbReference type="EMBL" id="AF322145">
    <property type="protein sequence ID" value="AAL36596.1"/>
    <property type="status" value="JOINED"/>
    <property type="molecule type" value="Genomic_DNA"/>
</dbReference>
<dbReference type="EMBL" id="AF322146">
    <property type="protein sequence ID" value="AAL36596.1"/>
    <property type="status" value="JOINED"/>
    <property type="molecule type" value="Genomic_DNA"/>
</dbReference>
<dbReference type="EMBL" id="AF322147">
    <property type="protein sequence ID" value="AAL36596.1"/>
    <property type="status" value="JOINED"/>
    <property type="molecule type" value="Genomic_DNA"/>
</dbReference>
<dbReference type="EMBL" id="AF322148">
    <property type="protein sequence ID" value="AAL36596.1"/>
    <property type="status" value="JOINED"/>
    <property type="molecule type" value="Genomic_DNA"/>
</dbReference>
<dbReference type="EMBL" id="AF322149">
    <property type="protein sequence ID" value="AAL36596.1"/>
    <property type="status" value="JOINED"/>
    <property type="molecule type" value="Genomic_DNA"/>
</dbReference>
<dbReference type="EMBL" id="AF322150">
    <property type="protein sequence ID" value="AAL36596.1"/>
    <property type="status" value="JOINED"/>
    <property type="molecule type" value="Genomic_DNA"/>
</dbReference>
<dbReference type="EMBL" id="AF322151">
    <property type="protein sequence ID" value="AAL36596.1"/>
    <property type="status" value="JOINED"/>
    <property type="molecule type" value="Genomic_DNA"/>
</dbReference>
<dbReference type="EMBL" id="AF322152">
    <property type="protein sequence ID" value="AAL36596.1"/>
    <property type="status" value="JOINED"/>
    <property type="molecule type" value="Genomic_DNA"/>
</dbReference>
<dbReference type="EMBL" id="AF322153">
    <property type="protein sequence ID" value="AAL36596.1"/>
    <property type="status" value="JOINED"/>
    <property type="molecule type" value="Genomic_DNA"/>
</dbReference>
<dbReference type="EMBL" id="AF322154">
    <property type="protein sequence ID" value="AAL36596.1"/>
    <property type="status" value="JOINED"/>
    <property type="molecule type" value="Genomic_DNA"/>
</dbReference>
<dbReference type="EMBL" id="AF322155">
    <property type="protein sequence ID" value="AAL36596.1"/>
    <property type="status" value="JOINED"/>
    <property type="molecule type" value="Genomic_DNA"/>
</dbReference>
<dbReference type="EMBL" id="AF322156">
    <property type="protein sequence ID" value="AAL36596.1"/>
    <property type="status" value="JOINED"/>
    <property type="molecule type" value="Genomic_DNA"/>
</dbReference>
<dbReference type="EMBL" id="AF322157">
    <property type="protein sequence ID" value="AAL36596.1"/>
    <property type="status" value="JOINED"/>
    <property type="molecule type" value="Genomic_DNA"/>
</dbReference>
<dbReference type="EMBL" id="AF322158">
    <property type="protein sequence ID" value="AAL36596.1"/>
    <property type="status" value="JOINED"/>
    <property type="molecule type" value="Genomic_DNA"/>
</dbReference>
<dbReference type="EMBL" id="AF322159">
    <property type="protein sequence ID" value="AAL36596.1"/>
    <property type="status" value="JOINED"/>
    <property type="molecule type" value="Genomic_DNA"/>
</dbReference>
<dbReference type="EMBL" id="AF322160">
    <property type="protein sequence ID" value="AAL36596.1"/>
    <property type="status" value="JOINED"/>
    <property type="molecule type" value="Genomic_DNA"/>
</dbReference>
<dbReference type="EMBL" id="AF322161">
    <property type="protein sequence ID" value="AAL36596.1"/>
    <property type="status" value="JOINED"/>
    <property type="molecule type" value="Genomic_DNA"/>
</dbReference>
<dbReference type="EMBL" id="AF322162">
    <property type="protein sequence ID" value="AAL36596.1"/>
    <property type="status" value="JOINED"/>
    <property type="molecule type" value="Genomic_DNA"/>
</dbReference>
<dbReference type="EMBL" id="AF322163">
    <property type="protein sequence ID" value="AAL36596.1"/>
    <property type="status" value="JOINED"/>
    <property type="molecule type" value="Genomic_DNA"/>
</dbReference>
<dbReference type="EMBL" id="AF322164">
    <property type="protein sequence ID" value="AAL36596.1"/>
    <property type="status" value="JOINED"/>
    <property type="molecule type" value="Genomic_DNA"/>
</dbReference>
<dbReference type="EMBL" id="AF322165">
    <property type="protein sequence ID" value="AAL36596.1"/>
    <property type="status" value="JOINED"/>
    <property type="molecule type" value="Genomic_DNA"/>
</dbReference>
<dbReference type="EMBL" id="AF322166">
    <property type="protein sequence ID" value="AAL36596.1"/>
    <property type="status" value="JOINED"/>
    <property type="molecule type" value="Genomic_DNA"/>
</dbReference>
<dbReference type="EMBL" id="AF322167">
    <property type="protein sequence ID" value="AAL36596.1"/>
    <property type="status" value="JOINED"/>
    <property type="molecule type" value="Genomic_DNA"/>
</dbReference>
<dbReference type="EMBL" id="AF322168">
    <property type="protein sequence ID" value="AAL36596.1"/>
    <property type="status" value="JOINED"/>
    <property type="molecule type" value="Genomic_DNA"/>
</dbReference>
<dbReference type="EMBL" id="AF322169">
    <property type="protein sequence ID" value="AAL36596.1"/>
    <property type="status" value="JOINED"/>
    <property type="molecule type" value="Genomic_DNA"/>
</dbReference>
<dbReference type="EMBL" id="AF322170">
    <property type="protein sequence ID" value="AAL36596.1"/>
    <property type="status" value="JOINED"/>
    <property type="molecule type" value="Genomic_DNA"/>
</dbReference>
<dbReference type="EMBL" id="AF322171">
    <property type="protein sequence ID" value="AAL36596.1"/>
    <property type="status" value="JOINED"/>
    <property type="molecule type" value="Genomic_DNA"/>
</dbReference>
<dbReference type="EMBL" id="AF322172">
    <property type="protein sequence ID" value="AAL36596.1"/>
    <property type="status" value="JOINED"/>
    <property type="molecule type" value="Genomic_DNA"/>
</dbReference>
<dbReference type="EMBL" id="AF322173">
    <property type="protein sequence ID" value="AAL36596.1"/>
    <property type="status" value="JOINED"/>
    <property type="molecule type" value="Genomic_DNA"/>
</dbReference>
<dbReference type="EMBL" id="AF322174">
    <property type="protein sequence ID" value="AAL36596.1"/>
    <property type="status" value="JOINED"/>
    <property type="molecule type" value="Genomic_DNA"/>
</dbReference>
<dbReference type="EMBL" id="AF322175">
    <property type="protein sequence ID" value="AAL36596.1"/>
    <property type="status" value="JOINED"/>
    <property type="molecule type" value="Genomic_DNA"/>
</dbReference>
<dbReference type="EMBL" id="AF322176">
    <property type="protein sequence ID" value="AAL36596.1"/>
    <property type="status" value="JOINED"/>
    <property type="molecule type" value="Genomic_DNA"/>
</dbReference>
<dbReference type="EMBL" id="AF322177">
    <property type="protein sequence ID" value="AAL36596.1"/>
    <property type="status" value="JOINED"/>
    <property type="molecule type" value="Genomic_DNA"/>
</dbReference>
<dbReference type="EMBL" id="AC025116">
    <property type="status" value="NOT_ANNOTATED_CDS"/>
    <property type="molecule type" value="Genomic_DNA"/>
</dbReference>
<dbReference type="EMBL" id="CH466548">
    <property type="protein sequence ID" value="EDL00068.1"/>
    <property type="molecule type" value="Genomic_DNA"/>
</dbReference>
<dbReference type="EMBL" id="BC138876">
    <property type="protein sequence ID" value="AAI38877.1"/>
    <property type="molecule type" value="mRNA"/>
</dbReference>
<dbReference type="CCDS" id="CCDS14969.1"/>
<dbReference type="RefSeq" id="NP_076106.2">
    <property type="nucleotide sequence ID" value="NM_023617.2"/>
</dbReference>
<dbReference type="PDB" id="3ZYV">
    <property type="method" value="X-ray"/>
    <property type="resolution" value="2.54 A"/>
    <property type="chains" value="A/B/C/D=1-1335"/>
</dbReference>
<dbReference type="PDBsum" id="3ZYV"/>
<dbReference type="SMR" id="G3X982"/>
<dbReference type="BioGRID" id="214883">
    <property type="interactions" value="1"/>
</dbReference>
<dbReference type="FunCoup" id="G3X982">
    <property type="interactions" value="437"/>
</dbReference>
<dbReference type="STRING" id="10090.ENSMUSP00000049391"/>
<dbReference type="GlyGen" id="G3X982">
    <property type="glycosylation" value="1 site, 1 O-linked glycan (1 site)"/>
</dbReference>
<dbReference type="iPTMnet" id="G3X982"/>
<dbReference type="PhosphoSitePlus" id="G3X982"/>
<dbReference type="SwissPalm" id="G3X982"/>
<dbReference type="jPOST" id="G3X982"/>
<dbReference type="PaxDb" id="10090-ENSMUSP00000049391"/>
<dbReference type="PeptideAtlas" id="G3X982"/>
<dbReference type="ProteomicsDB" id="282130"/>
<dbReference type="DNASU" id="71724"/>
<dbReference type="Ensembl" id="ENSMUST00000040999.14">
    <property type="protein sequence ID" value="ENSMUSP00000049391.8"/>
    <property type="gene ID" value="ENSMUSG00000064294.13"/>
</dbReference>
<dbReference type="GeneID" id="71724"/>
<dbReference type="KEGG" id="mmu:71724"/>
<dbReference type="UCSC" id="uc007bbm.1">
    <property type="organism name" value="mouse"/>
</dbReference>
<dbReference type="AGR" id="MGI:1918974"/>
<dbReference type="CTD" id="71724"/>
<dbReference type="MGI" id="MGI:1918974">
    <property type="gene designation" value="Aox3"/>
</dbReference>
<dbReference type="VEuPathDB" id="HostDB:ENSMUSG00000064294"/>
<dbReference type="eggNOG" id="KOG0430">
    <property type="taxonomic scope" value="Eukaryota"/>
</dbReference>
<dbReference type="GeneTree" id="ENSGT00950000183114"/>
<dbReference type="HOGENOM" id="CLU_001681_1_2_1"/>
<dbReference type="InParanoid" id="G3X982"/>
<dbReference type="OMA" id="CDIPREF"/>
<dbReference type="OrthoDB" id="8300278at2759"/>
<dbReference type="PhylomeDB" id="G3X982"/>
<dbReference type="TreeFam" id="TF353036"/>
<dbReference type="BRENDA" id="1.2.3.1">
    <property type="organism ID" value="3474"/>
</dbReference>
<dbReference type="BioGRID-ORCS" id="71724">
    <property type="hits" value="3 hits in 77 CRISPR screens"/>
</dbReference>
<dbReference type="ChiTaRS" id="Aox3">
    <property type="organism name" value="mouse"/>
</dbReference>
<dbReference type="EvolutionaryTrace" id="G3X982"/>
<dbReference type="PRO" id="PR:G3X982"/>
<dbReference type="Proteomes" id="UP000000589">
    <property type="component" value="Chromosome 1"/>
</dbReference>
<dbReference type="RNAct" id="G3X982">
    <property type="molecule type" value="protein"/>
</dbReference>
<dbReference type="Bgee" id="ENSMUSG00000064294">
    <property type="expression patterns" value="Expressed in left lobe of liver and 70 other cell types or tissues"/>
</dbReference>
<dbReference type="ExpressionAtlas" id="G3X982">
    <property type="expression patterns" value="baseline and differential"/>
</dbReference>
<dbReference type="GO" id="GO:0005829">
    <property type="term" value="C:cytosol"/>
    <property type="evidence" value="ECO:0000314"/>
    <property type="project" value="MGI"/>
</dbReference>
<dbReference type="GO" id="GO:0051537">
    <property type="term" value="F:2 iron, 2 sulfur cluster binding"/>
    <property type="evidence" value="ECO:0000250"/>
    <property type="project" value="UniProtKB"/>
</dbReference>
<dbReference type="GO" id="GO:0004031">
    <property type="term" value="F:aldehyde oxidase activity"/>
    <property type="evidence" value="ECO:0000314"/>
    <property type="project" value="MGI"/>
</dbReference>
<dbReference type="GO" id="GO:0009055">
    <property type="term" value="F:electron transfer activity"/>
    <property type="evidence" value="ECO:0000314"/>
    <property type="project" value="MGI"/>
</dbReference>
<dbReference type="GO" id="GO:0071949">
    <property type="term" value="F:FAD binding"/>
    <property type="evidence" value="ECO:0007669"/>
    <property type="project" value="InterPro"/>
</dbReference>
<dbReference type="GO" id="GO:0050660">
    <property type="term" value="F:flavin adenine dinucleotide binding"/>
    <property type="evidence" value="ECO:0000250"/>
    <property type="project" value="UniProtKB"/>
</dbReference>
<dbReference type="GO" id="GO:0005506">
    <property type="term" value="F:iron ion binding"/>
    <property type="evidence" value="ECO:0000250"/>
    <property type="project" value="UniProtKB"/>
</dbReference>
<dbReference type="GO" id="GO:0030151">
    <property type="term" value="F:molybdenum ion binding"/>
    <property type="evidence" value="ECO:0000314"/>
    <property type="project" value="MGI"/>
</dbReference>
<dbReference type="GO" id="GO:0043546">
    <property type="term" value="F:molybdopterin cofactor binding"/>
    <property type="evidence" value="ECO:0000250"/>
    <property type="project" value="UniProtKB"/>
</dbReference>
<dbReference type="GO" id="GO:0051287">
    <property type="term" value="F:NAD binding"/>
    <property type="evidence" value="ECO:0007669"/>
    <property type="project" value="InterPro"/>
</dbReference>
<dbReference type="GO" id="GO:0042803">
    <property type="term" value="F:protein homodimerization activity"/>
    <property type="evidence" value="ECO:0000250"/>
    <property type="project" value="UniProtKB"/>
</dbReference>
<dbReference type="GO" id="GO:0006805">
    <property type="term" value="P:xenobiotic metabolic process"/>
    <property type="evidence" value="ECO:0000250"/>
    <property type="project" value="UniProtKB"/>
</dbReference>
<dbReference type="FunFam" id="1.10.150.120:FF:000001">
    <property type="entry name" value="Aldehyde oxidase 1"/>
    <property type="match status" value="1"/>
</dbReference>
<dbReference type="FunFam" id="3.10.20.30:FF:000015">
    <property type="entry name" value="Aldehyde oxidase 1"/>
    <property type="match status" value="1"/>
</dbReference>
<dbReference type="FunFam" id="3.30.365.10:FF:000003">
    <property type="entry name" value="Aldehyde oxidase 1"/>
    <property type="match status" value="1"/>
</dbReference>
<dbReference type="FunFam" id="3.90.1170.50:FF:000001">
    <property type="entry name" value="Aldehyde oxidase 1"/>
    <property type="match status" value="1"/>
</dbReference>
<dbReference type="FunFam" id="3.30.365.10:FF:000025">
    <property type="entry name" value="Aldehyde oxidase 4"/>
    <property type="match status" value="1"/>
</dbReference>
<dbReference type="FunFam" id="3.30.365.10:FF:000001">
    <property type="entry name" value="Xanthine dehydrogenase oxidase"/>
    <property type="match status" value="1"/>
</dbReference>
<dbReference type="FunFam" id="3.30.365.10:FF:000004">
    <property type="entry name" value="Xanthine dehydrogenase oxidase"/>
    <property type="match status" value="1"/>
</dbReference>
<dbReference type="FunFam" id="3.30.390.50:FF:000001">
    <property type="entry name" value="Xanthine dehydrogenase oxidase"/>
    <property type="match status" value="1"/>
</dbReference>
<dbReference type="FunFam" id="3.30.43.10:FF:000001">
    <property type="entry name" value="Xanthine dehydrogenase/oxidase"/>
    <property type="match status" value="1"/>
</dbReference>
<dbReference type="FunFam" id="3.30.465.10:FF:000004">
    <property type="entry name" value="Xanthine dehydrogenase/oxidase"/>
    <property type="match status" value="1"/>
</dbReference>
<dbReference type="Gene3D" id="3.10.20.30">
    <property type="match status" value="1"/>
</dbReference>
<dbReference type="Gene3D" id="3.30.465.10">
    <property type="match status" value="1"/>
</dbReference>
<dbReference type="Gene3D" id="1.10.150.120">
    <property type="entry name" value="[2Fe-2S]-binding domain"/>
    <property type="match status" value="1"/>
</dbReference>
<dbReference type="Gene3D" id="3.90.1170.50">
    <property type="entry name" value="Aldehyde oxidase/xanthine dehydrogenase, a/b hammerhead"/>
    <property type="match status" value="1"/>
</dbReference>
<dbReference type="Gene3D" id="3.30.365.10">
    <property type="entry name" value="Aldehyde oxidase/xanthine dehydrogenase, molybdopterin binding domain"/>
    <property type="match status" value="5"/>
</dbReference>
<dbReference type="Gene3D" id="3.30.390.50">
    <property type="entry name" value="CO dehydrogenase flavoprotein, C-terminal domain"/>
    <property type="match status" value="1"/>
</dbReference>
<dbReference type="Gene3D" id="3.30.43.10">
    <property type="entry name" value="Uridine Diphospho-n-acetylenolpyruvylglucosamine Reductase, domain 2"/>
    <property type="match status" value="1"/>
</dbReference>
<dbReference type="InterPro" id="IPR002888">
    <property type="entry name" value="2Fe-2S-bd"/>
</dbReference>
<dbReference type="InterPro" id="IPR036884">
    <property type="entry name" value="2Fe-2S-bd_dom_sf"/>
</dbReference>
<dbReference type="InterPro" id="IPR036010">
    <property type="entry name" value="2Fe-2S_ferredoxin-like_sf"/>
</dbReference>
<dbReference type="InterPro" id="IPR001041">
    <property type="entry name" value="2Fe-2S_ferredoxin-type"/>
</dbReference>
<dbReference type="InterPro" id="IPR006058">
    <property type="entry name" value="2Fe2S_fd_BS"/>
</dbReference>
<dbReference type="InterPro" id="IPR000674">
    <property type="entry name" value="Ald_Oxase/Xan_DH_a/b"/>
</dbReference>
<dbReference type="InterPro" id="IPR036856">
    <property type="entry name" value="Ald_Oxase/Xan_DH_a/b_sf"/>
</dbReference>
<dbReference type="InterPro" id="IPR016208">
    <property type="entry name" value="Ald_Oxase/xanthine_DH-like"/>
</dbReference>
<dbReference type="InterPro" id="IPR014313">
    <property type="entry name" value="Aldehyde_oxidase"/>
</dbReference>
<dbReference type="InterPro" id="IPR008274">
    <property type="entry name" value="AldOxase/xan_DH_MoCoBD1"/>
</dbReference>
<dbReference type="InterPro" id="IPR046867">
    <property type="entry name" value="AldOxase/xan_DH_MoCoBD2"/>
</dbReference>
<dbReference type="InterPro" id="IPR037165">
    <property type="entry name" value="AldOxase/xan_DH_Mopterin-bd_sf"/>
</dbReference>
<dbReference type="InterPro" id="IPR012675">
    <property type="entry name" value="Beta-grasp_dom_sf"/>
</dbReference>
<dbReference type="InterPro" id="IPR005107">
    <property type="entry name" value="CO_DH_flav_C"/>
</dbReference>
<dbReference type="InterPro" id="IPR036683">
    <property type="entry name" value="CO_DH_flav_C_dom_sf"/>
</dbReference>
<dbReference type="InterPro" id="IPR016166">
    <property type="entry name" value="FAD-bd_PCMH"/>
</dbReference>
<dbReference type="InterPro" id="IPR036318">
    <property type="entry name" value="FAD-bd_PCMH-like_sf"/>
</dbReference>
<dbReference type="InterPro" id="IPR016167">
    <property type="entry name" value="FAD-bd_PCMH_sub1"/>
</dbReference>
<dbReference type="InterPro" id="IPR016169">
    <property type="entry name" value="FAD-bd_PCMH_sub2"/>
</dbReference>
<dbReference type="InterPro" id="IPR002346">
    <property type="entry name" value="Mopterin_DH_FAD-bd"/>
</dbReference>
<dbReference type="NCBIfam" id="TIGR02969">
    <property type="entry name" value="mam_aldehyde_ox"/>
    <property type="match status" value="1"/>
</dbReference>
<dbReference type="PANTHER" id="PTHR45444">
    <property type="entry name" value="XANTHINE DEHYDROGENASE"/>
    <property type="match status" value="1"/>
</dbReference>
<dbReference type="PANTHER" id="PTHR45444:SF3">
    <property type="entry name" value="XANTHINE DEHYDROGENASE"/>
    <property type="match status" value="1"/>
</dbReference>
<dbReference type="Pfam" id="PF01315">
    <property type="entry name" value="Ald_Xan_dh_C"/>
    <property type="match status" value="1"/>
</dbReference>
<dbReference type="Pfam" id="PF03450">
    <property type="entry name" value="CO_deh_flav_C"/>
    <property type="match status" value="1"/>
</dbReference>
<dbReference type="Pfam" id="PF00941">
    <property type="entry name" value="FAD_binding_5"/>
    <property type="match status" value="1"/>
</dbReference>
<dbReference type="Pfam" id="PF00111">
    <property type="entry name" value="Fer2"/>
    <property type="match status" value="1"/>
</dbReference>
<dbReference type="Pfam" id="PF01799">
    <property type="entry name" value="Fer2_2"/>
    <property type="match status" value="1"/>
</dbReference>
<dbReference type="Pfam" id="PF02738">
    <property type="entry name" value="MoCoBD_1"/>
    <property type="match status" value="1"/>
</dbReference>
<dbReference type="Pfam" id="PF20256">
    <property type="entry name" value="MoCoBD_2"/>
    <property type="match status" value="1"/>
</dbReference>
<dbReference type="PIRSF" id="PIRSF000127">
    <property type="entry name" value="Xanthine_DH"/>
    <property type="match status" value="1"/>
</dbReference>
<dbReference type="SMART" id="SM01008">
    <property type="entry name" value="Ald_Xan_dh_C"/>
    <property type="match status" value="1"/>
</dbReference>
<dbReference type="SMART" id="SM01092">
    <property type="entry name" value="CO_deh_flav_C"/>
    <property type="match status" value="1"/>
</dbReference>
<dbReference type="SUPFAM" id="SSF54292">
    <property type="entry name" value="2Fe-2S ferredoxin-like"/>
    <property type="match status" value="1"/>
</dbReference>
<dbReference type="SUPFAM" id="SSF55447">
    <property type="entry name" value="CO dehydrogenase flavoprotein C-terminal domain-like"/>
    <property type="match status" value="1"/>
</dbReference>
<dbReference type="SUPFAM" id="SSF47741">
    <property type="entry name" value="CO dehydrogenase ISP C-domain like"/>
    <property type="match status" value="1"/>
</dbReference>
<dbReference type="SUPFAM" id="SSF54665">
    <property type="entry name" value="CO dehydrogenase molybdoprotein N-domain-like"/>
    <property type="match status" value="1"/>
</dbReference>
<dbReference type="SUPFAM" id="SSF56176">
    <property type="entry name" value="FAD-binding/transporter-associated domain-like"/>
    <property type="match status" value="1"/>
</dbReference>
<dbReference type="SUPFAM" id="SSF56003">
    <property type="entry name" value="Molybdenum cofactor-binding domain"/>
    <property type="match status" value="1"/>
</dbReference>
<dbReference type="PROSITE" id="PS00197">
    <property type="entry name" value="2FE2S_FER_1"/>
    <property type="match status" value="1"/>
</dbReference>
<dbReference type="PROSITE" id="PS51085">
    <property type="entry name" value="2FE2S_FER_2"/>
    <property type="match status" value="1"/>
</dbReference>
<dbReference type="PROSITE" id="PS51387">
    <property type="entry name" value="FAD_PCMH"/>
    <property type="match status" value="1"/>
</dbReference>
<comment type="function">
    <text evidence="4 6 7 8">Oxidase with broad substrate specificity, oxidizing aromatic azaheterocycles, such as N1-methylnicotinamide and phthalazine, as well as aldehydes, such as benzaldehyde, retinal and pyridoxal. Plays a key role in the metabolism of xenobiotics and drugs containing aromatic azaheterocyclic substituents. Is probably involved in the regulation of reactive oxygen species homeostasis. May be a prominent source of superoxide generation via the one-electron reduction of molecular oxygen. May also catalyze nitric oxide (NO) production via the reduction of nitrite to NO with NADH or aldehyde as electron donor.</text>
</comment>
<comment type="catalytic activity">
    <reaction evidence="4 7 8">
        <text>an aldehyde + O2 + H2O = a carboxylate + H2O2 + H(+)</text>
        <dbReference type="Rhea" id="RHEA:16829"/>
        <dbReference type="ChEBI" id="CHEBI:15377"/>
        <dbReference type="ChEBI" id="CHEBI:15378"/>
        <dbReference type="ChEBI" id="CHEBI:15379"/>
        <dbReference type="ChEBI" id="CHEBI:16240"/>
        <dbReference type="ChEBI" id="CHEBI:17478"/>
        <dbReference type="ChEBI" id="CHEBI:29067"/>
        <dbReference type="EC" id="1.2.3.1"/>
    </reaction>
</comment>
<comment type="cofactor">
    <cofactor evidence="4">
        <name>[2Fe-2S] cluster</name>
        <dbReference type="ChEBI" id="CHEBI:190135"/>
    </cofactor>
    <text evidence="4">Binds 2 [2Fe-2S] clusters per subunit.</text>
</comment>
<comment type="cofactor">
    <cofactor evidence="4">
        <name>FAD</name>
        <dbReference type="ChEBI" id="CHEBI:57692"/>
    </cofactor>
    <text evidence="4">Binds 1 FAD per subunit.</text>
</comment>
<comment type="cofactor">
    <cofactor evidence="4">
        <name>Mo-molybdopterin</name>
        <dbReference type="ChEBI" id="CHEBI:71302"/>
    </cofactor>
    <text evidence="4">Binds 1 Mo-molybdopterin (Mo-MPT) cofactor per subunit.</text>
</comment>
<comment type="activity regulation">
    <text evidence="4 8">Inhibited by potassium cyanide, menadione, benzamidine, raloxifene and norharmane.</text>
</comment>
<comment type="biophysicochemical properties">
    <kinetics>
        <KM evidence="4 7 8">2.3 uM for phthalazine</KM>
        <KM evidence="4 7 8">1.4 uM for phthalazine (at 37 degrees Celsius and pH 8)</KM>
        <KM evidence="4 7 8">2.5 uM for benzaldehyde (at 37 degrees Celsius and pH 8)</KM>
        <KM evidence="4 7 8">128.5 uM for N1-methylnicotinamide (at 37 degrees Celsius and pH 8)</KM>
        <KM evidence="4 7 8">32.3 uM for phenanthridine (at 37 degrees Celsius and pH 8)</KM>
        <KM evidence="4 7 8">13 uM for benzaldehyde (at 37 degrees Celsius and pH 7.4)</KM>
        <KM evidence="4 7 8">29 uM for butyraldehyde (at 37 degrees Celsius and pH 8)</KM>
        <KM evidence="4 7 8">173 uM for 2-OH-pyrimidine (at 37 degrees Celsius and pH 8)</KM>
        <text evidence="4 7 8">kcat is 4 sec(-1) for phthalazine oxidation (PubMed:11562361). kcat is 130 min(-1) for benzaldehyde oxidation, 384 min(-1) for butyraldehyde oxidation and 1279 min(-1) for 2-OH-pyrimidine oxidation (PubMed:21705476). kcat is 41.1 min(-1) for phthalazine oxidation, 41.9 min(-1) for benzaldehyde oxidation, 14.7 min(-1) for N1-methylnicotinamide oxidation and 51.7 min(-1) for phenanthridine oxidation (PubMed:23019336).</text>
    </kinetics>
</comment>
<comment type="subunit">
    <text evidence="8">Homodimer.</text>
</comment>
<comment type="subcellular location">
    <subcellularLocation>
        <location evidence="4 5">Cytoplasm</location>
    </subcellularLocation>
</comment>
<comment type="tissue specificity">
    <text evidence="4 5 6">Highly expressed in liver (at protein level). In liver, the expression is greater in males than females.</text>
</comment>
<comment type="induction">
    <text evidence="6">Induced by testosterone.</text>
</comment>
<comment type="miscellaneous">
    <text evidence="11">AOX genes evolved from a xanthine oxidoreductase ancestral precursor via a series of gene duplication and suppression/deletion events. Different animal species contain a different complement of AOX genes encoding an equivalent number of AOX isoenzymes. In mammals, the two extremes are represented by certain rodents such as mice and rats, which are endowed with 4 AOX genes, and by humans, whose genome is characterized by a single active gene (PubMed:23263164).</text>
</comment>
<comment type="similarity">
    <text evidence="9">Belongs to the xanthine dehydrogenase family.</text>
</comment>
<organism>
    <name type="scientific">Mus musculus</name>
    <name type="common">Mouse</name>
    <dbReference type="NCBI Taxonomy" id="10090"/>
    <lineage>
        <taxon>Eukaryota</taxon>
        <taxon>Metazoa</taxon>
        <taxon>Chordata</taxon>
        <taxon>Craniata</taxon>
        <taxon>Vertebrata</taxon>
        <taxon>Euteleostomi</taxon>
        <taxon>Mammalia</taxon>
        <taxon>Eutheria</taxon>
        <taxon>Euarchontoglires</taxon>
        <taxon>Glires</taxon>
        <taxon>Rodentia</taxon>
        <taxon>Myomorpha</taxon>
        <taxon>Muroidea</taxon>
        <taxon>Muridae</taxon>
        <taxon>Murinae</taxon>
        <taxon>Mus</taxon>
        <taxon>Mus</taxon>
    </lineage>
</organism>
<keyword id="KW-0001">2Fe-2S</keyword>
<keyword id="KW-0002">3D-structure</keyword>
<keyword id="KW-0963">Cytoplasm</keyword>
<keyword id="KW-0903">Direct protein sequencing</keyword>
<keyword id="KW-0274">FAD</keyword>
<keyword id="KW-0285">Flavoprotein</keyword>
<keyword id="KW-0408">Iron</keyword>
<keyword id="KW-0411">Iron-sulfur</keyword>
<keyword id="KW-0479">Metal-binding</keyword>
<keyword id="KW-0500">Molybdenum</keyword>
<keyword id="KW-0560">Oxidoreductase</keyword>
<keyword id="KW-0597">Phosphoprotein</keyword>
<keyword id="KW-1185">Reference proteome</keyword>
<protein>
    <recommendedName>
        <fullName>Aldehyde oxidase 3</fullName>
        <ecNumber evidence="4 7 8">1.2.3.1</ecNumber>
    </recommendedName>
    <alternativeName>
        <fullName>Aldehyde oxidase homolog 1</fullName>
    </alternativeName>
    <alternativeName>
        <fullName>Azaheterocycle hydroxylase 3</fullName>
        <ecNumber>1.17.3.-</ecNumber>
    </alternativeName>
</protein>
<proteinExistence type="evidence at protein level"/>
<gene>
    <name type="primary">Aox3</name>
    <name type="synonym">Aoh1</name>
</gene>
<reference key="1">
    <citation type="journal article" date="2001" name="J. Biol. Chem.">
        <title>Purification of the aldehyde oxidase homolog 1 (AOH1) protein and cloning of the AOH1 and aldehyde oxidase homolog 2 (AOH2) genes. Identification of a novel molybdo-flavoprotein gene cluster on mouse chromosome 1.</title>
        <authorList>
            <person name="Terao M."/>
            <person name="Kurosaki M."/>
            <person name="Marini M."/>
            <person name="Vanoni M.A."/>
            <person name="Saltini G."/>
            <person name="Bonetto V."/>
            <person name="Bastone A."/>
            <person name="Federico C."/>
            <person name="Saccone S."/>
            <person name="Fanelli R."/>
            <person name="Salmona M."/>
            <person name="Garattini E."/>
        </authorList>
    </citation>
    <scope>NUCLEOTIDE SEQUENCE [GENOMIC DNA]</scope>
    <scope>PROTEIN SEQUENCE OF 206-224; 247-256; 351-362; 807-823 AND 1291-1308</scope>
    <scope>IDENTIFICATION BY MASS SPECTROMETRY</scope>
    <scope>FUNCTION AS OXIDASE</scope>
    <scope>CATALYTIC ACTIVITY</scope>
    <scope>ACTIVITY REGULATION</scope>
    <scope>BIOPHYSICOCHEMICAL PROPERTIES</scope>
    <scope>SUBCELLULAR LOCATION</scope>
    <scope>TISSUE SPECIFICITY</scope>
    <source>
        <strain>129/Sv</strain>
    </source>
</reference>
<reference key="2">
    <citation type="journal article" date="2009" name="PLoS Biol.">
        <title>Lineage-specific biology revealed by a finished genome assembly of the mouse.</title>
        <authorList>
            <person name="Church D.M."/>
            <person name="Goodstadt L."/>
            <person name="Hillier L.W."/>
            <person name="Zody M.C."/>
            <person name="Goldstein S."/>
            <person name="She X."/>
            <person name="Bult C.J."/>
            <person name="Agarwala R."/>
            <person name="Cherry J.L."/>
            <person name="DiCuccio M."/>
            <person name="Hlavina W."/>
            <person name="Kapustin Y."/>
            <person name="Meric P."/>
            <person name="Maglott D."/>
            <person name="Birtle Z."/>
            <person name="Marques A.C."/>
            <person name="Graves T."/>
            <person name="Zhou S."/>
            <person name="Teague B."/>
            <person name="Potamousis K."/>
            <person name="Churas C."/>
            <person name="Place M."/>
            <person name="Herschleb J."/>
            <person name="Runnheim R."/>
            <person name="Forrest D."/>
            <person name="Amos-Landgraf J."/>
            <person name="Schwartz D.C."/>
            <person name="Cheng Z."/>
            <person name="Lindblad-Toh K."/>
            <person name="Eichler E.E."/>
            <person name="Ponting C.P."/>
        </authorList>
    </citation>
    <scope>NUCLEOTIDE SEQUENCE [LARGE SCALE GENOMIC DNA]</scope>
    <source>
        <strain>C57BL/6J</strain>
    </source>
</reference>
<reference key="3">
    <citation type="submission" date="2005-07" db="EMBL/GenBank/DDBJ databases">
        <authorList>
            <person name="Mural R.J."/>
            <person name="Adams M.D."/>
            <person name="Myers E.W."/>
            <person name="Smith H.O."/>
            <person name="Venter J.C."/>
        </authorList>
    </citation>
    <scope>NUCLEOTIDE SEQUENCE [LARGE SCALE GENOMIC DNA]</scope>
</reference>
<reference key="4">
    <citation type="journal article" date="2004" name="Genome Res.">
        <title>The status, quality, and expansion of the NIH full-length cDNA project: the Mammalian Gene Collection (MGC).</title>
        <authorList>
            <consortium name="The MGC Project Team"/>
        </authorList>
    </citation>
    <scope>NUCLEOTIDE SEQUENCE [LARGE SCALE MRNA]</scope>
</reference>
<reference key="5">
    <citation type="journal article" date="2004" name="J. Biol. Chem.">
        <title>The aldehyde oxidase gene cluster in mice and rats. Aldehyde oxidase homologue 3, a novel member of the molybdo-flavoenzyme family with selective expression in the olfactory mucosa.</title>
        <authorList>
            <person name="Kurosaki M."/>
            <person name="Terao M."/>
            <person name="Barzago M.M."/>
            <person name="Bastone A."/>
            <person name="Bernardinello D."/>
            <person name="Salmona M."/>
            <person name="Garattini E."/>
        </authorList>
    </citation>
    <scope>TISSUE SPECIFICITY</scope>
    <scope>SUBCELLULAR LOCATION</scope>
    <source>
        <strain>CD-1</strain>
        <tissue>Olfactory epithelium</tissue>
    </source>
</reference>
<reference key="6">
    <citation type="journal article" date="2009" name="Mol. Cell. Biol.">
        <title>Role of the molybdoflavoenzyme aldehyde oxidase homolog 2 in the biosynthesis of retinoic acid: generation and characterization of a knockout mouse.</title>
        <authorList>
            <person name="Terao M."/>
            <person name="Kurosaki M."/>
            <person name="Barzago M.M."/>
            <person name="Fratelli M."/>
            <person name="Bagnati R."/>
            <person name="Bastone A."/>
            <person name="Giudice C."/>
            <person name="Scanziani E."/>
            <person name="Mancuso A."/>
            <person name="Tiveron C."/>
            <person name="Garattini E."/>
        </authorList>
    </citation>
    <scope>FUNCTION</scope>
    <scope>TISSUE SPECIFICITY</scope>
    <scope>INDUCTION BY TESTOSTERONE</scope>
</reference>
<reference key="7">
    <citation type="journal article" date="2010" name="Cell">
        <title>A tissue-specific atlas of mouse protein phosphorylation and expression.</title>
        <authorList>
            <person name="Huttlin E.L."/>
            <person name="Jedrychowski M.P."/>
            <person name="Elias J.E."/>
            <person name="Goswami T."/>
            <person name="Rad R."/>
            <person name="Beausoleil S.A."/>
            <person name="Villen J."/>
            <person name="Haas W."/>
            <person name="Sowa M.E."/>
            <person name="Gygi S.P."/>
        </authorList>
    </citation>
    <scope>IDENTIFICATION BY MASS SPECTROMETRY [LARGE SCALE ANALYSIS]</scope>
    <source>
        <tissue>Liver</tissue>
        <tissue>Lung</tissue>
    </source>
</reference>
<reference key="8">
    <citation type="journal article" date="2011" name="Drug Metab. Dispos.">
        <title>Characterization and crystallization of mouse aldehyde oxidase 3: from mouse liver to Escherichia coli heterologous protein expression.</title>
        <authorList>
            <person name="Mahro M."/>
            <person name="Coelho C."/>
            <person name="Trincao J."/>
            <person name="Rodrigues D."/>
            <person name="Terao M."/>
            <person name="Garattini E."/>
            <person name="Saggu M."/>
            <person name="Lendzian F."/>
            <person name="Hildebrandt P."/>
            <person name="Romao M.J."/>
            <person name="Leimkuhler S."/>
        </authorList>
    </citation>
    <scope>CRYSTALLIZATION</scope>
    <scope>FUNCTION AS OXIDASE</scope>
    <scope>SUBSTRATE SPECIFICITY</scope>
    <scope>CATALYTIC ACTIVITY</scope>
    <scope>BIOPHYSICOCHEMICAL PROPERTIES</scope>
    <scope>COFACTOR</scope>
    <scope>HOMODIMER</scope>
</reference>
<reference key="9">
    <citation type="journal article" date="2013" name="Cell. Mol. Life Sci.">
        <title>Structure and evolution of vertebrate aldehyde oxidases: from gene duplication to gene suppression.</title>
        <authorList>
            <person name="Kurosaki M."/>
            <person name="Bolis M."/>
            <person name="Fratelli M."/>
            <person name="Barzago M.M."/>
            <person name="Pattini L."/>
            <person name="Perretta G."/>
            <person name="Terao M."/>
            <person name="Garattini E."/>
        </authorList>
    </citation>
    <scope>IDENTIFICATION OF PARALOGS</scope>
</reference>
<reference key="10">
    <citation type="journal article" date="2012" name="J. Biol. Chem.">
        <title>The first mammalian aldehyde oxidase crystal structure: insights into substrate specificity.</title>
        <authorList>
            <person name="Coelho C."/>
            <person name="Mahro M."/>
            <person name="Trincao J."/>
            <person name="Carvalho A.T."/>
            <person name="Ramos M.J."/>
            <person name="Terao M."/>
            <person name="Garattini E."/>
            <person name="Leimkuhler S."/>
            <person name="Romao M.J."/>
        </authorList>
    </citation>
    <scope>X-RAY CRYSTALLOGRAPHY (2.54 ANGSTROMS) IN COMPLEX WITH FE-S CLUSTERS; FAD AND MO-MPT</scope>
    <scope>FUNCTION AS OXIDASE</scope>
    <scope>SUBSTRATE SPECIFICITY</scope>
    <scope>COFACTOR</scope>
    <scope>CATALYTIC ACTIVITY</scope>
    <scope>BIOPHYSICOCHEMICAL PROPERTIES</scope>
    <scope>HOMODIMER</scope>
    <scope>ACTIVITY REGULATION</scope>
    <scope>REACTION MECHANISM</scope>
    <scope>ACTIVE SITE</scope>
    <scope>MUTAGENESIS OF ALA-807; TYR-885; LYS-889 AND GLU-1266</scope>
</reference>
<feature type="chain" id="PRO_0000425247" description="Aldehyde oxidase 3">
    <location>
        <begin position="1"/>
        <end position="1335"/>
    </location>
</feature>
<feature type="domain" description="2Fe-2S ferredoxin-type" evidence="2">
    <location>
        <begin position="8"/>
        <end position="95"/>
    </location>
</feature>
<feature type="domain" description="FAD-binding PCMH-type" evidence="3">
    <location>
        <begin position="236"/>
        <end position="421"/>
    </location>
</feature>
<feature type="active site" description="Proton acceptor; for azaheterocycle hydroxylase activity" evidence="10">
    <location>
        <position position="1266"/>
    </location>
</feature>
<feature type="binding site" evidence="8">
    <location>
        <position position="47"/>
    </location>
    <ligand>
        <name>[2Fe-2S] cluster</name>
        <dbReference type="ChEBI" id="CHEBI:190135"/>
        <label>1</label>
    </ligand>
</feature>
<feature type="binding site" evidence="8">
    <location>
        <position position="52"/>
    </location>
    <ligand>
        <name>[2Fe-2S] cluster</name>
        <dbReference type="ChEBI" id="CHEBI:190135"/>
        <label>1</label>
    </ligand>
</feature>
<feature type="binding site" evidence="8">
    <location>
        <position position="55"/>
    </location>
    <ligand>
        <name>[2Fe-2S] cluster</name>
        <dbReference type="ChEBI" id="CHEBI:190135"/>
        <label>1</label>
    </ligand>
</feature>
<feature type="binding site" evidence="8">
    <location>
        <position position="77"/>
    </location>
    <ligand>
        <name>[2Fe-2S] cluster</name>
        <dbReference type="ChEBI" id="CHEBI:190135"/>
        <label>1</label>
    </ligand>
</feature>
<feature type="binding site" evidence="8">
    <location>
        <position position="116"/>
    </location>
    <ligand>
        <name>Mo-molybdopterin</name>
        <dbReference type="ChEBI" id="CHEBI:71302"/>
    </ligand>
</feature>
<feature type="binding site" evidence="8">
    <location>
        <position position="117"/>
    </location>
    <ligand>
        <name>[2Fe-2S] cluster</name>
        <dbReference type="ChEBI" id="CHEBI:190135"/>
        <label>2</label>
    </ligand>
</feature>
<feature type="binding site" evidence="8">
    <location>
        <position position="120"/>
    </location>
    <ligand>
        <name>[2Fe-2S] cluster</name>
        <dbReference type="ChEBI" id="CHEBI:190135"/>
        <label>2</label>
    </ligand>
</feature>
<feature type="binding site" evidence="8">
    <location>
        <position position="152"/>
    </location>
    <ligand>
        <name>[2Fe-2S] cluster</name>
        <dbReference type="ChEBI" id="CHEBI:190135"/>
        <label>2</label>
    </ligand>
</feature>
<feature type="binding site" evidence="8">
    <location>
        <position position="154"/>
    </location>
    <ligand>
        <name>[2Fe-2S] cluster</name>
        <dbReference type="ChEBI" id="CHEBI:190135"/>
        <label>2</label>
    </ligand>
</feature>
<feature type="binding site" evidence="8">
    <location>
        <begin position="264"/>
        <end position="271"/>
    </location>
    <ligand>
        <name>FAD</name>
        <dbReference type="ChEBI" id="CHEBI:57692"/>
    </ligand>
</feature>
<feature type="binding site" evidence="8">
    <location>
        <position position="354"/>
    </location>
    <ligand>
        <name>FAD</name>
        <dbReference type="ChEBI" id="CHEBI:57692"/>
    </ligand>
</feature>
<feature type="binding site" evidence="8">
    <location>
        <position position="358"/>
    </location>
    <ligand>
        <name>FAD</name>
        <dbReference type="ChEBI" id="CHEBI:57692"/>
    </ligand>
</feature>
<feature type="binding site" evidence="8">
    <location>
        <position position="367"/>
    </location>
    <ligand>
        <name>FAD</name>
        <dbReference type="ChEBI" id="CHEBI:57692"/>
    </ligand>
</feature>
<feature type="binding site" evidence="8">
    <location>
        <position position="411"/>
    </location>
    <ligand>
        <name>FAD</name>
        <dbReference type="ChEBI" id="CHEBI:57692"/>
    </ligand>
</feature>
<feature type="binding site" evidence="8">
    <location>
        <position position="802"/>
    </location>
    <ligand>
        <name>Mo-molybdopterin</name>
        <dbReference type="ChEBI" id="CHEBI:71302"/>
    </ligand>
</feature>
<feature type="binding site" evidence="8">
    <location>
        <position position="1043"/>
    </location>
    <ligand>
        <name>Mo-molybdopterin</name>
        <dbReference type="ChEBI" id="CHEBI:71302"/>
    </ligand>
</feature>
<feature type="binding site" evidence="8">
    <location>
        <position position="1199"/>
    </location>
    <ligand>
        <name>Mo-molybdopterin</name>
        <dbReference type="ChEBI" id="CHEBI:71302"/>
    </ligand>
</feature>
<feature type="modified residue" description="Phosphoserine" evidence="1">
    <location>
        <position position="320"/>
    </location>
</feature>
<feature type="mutagenesis site" description="No effect on kinetic constants with smaller substrates like benzaldehyde or phthalazine. Decreases substrate affinity and slightly increases catalytic efficiency for bulkier substrates like phenanthridine." evidence="8">
    <original>A</original>
    <variation>V</variation>
    <location>
        <position position="807"/>
    </location>
</feature>
<feature type="mutagenesis site" description="Slightly decreases substrate affinity but no effect on activity with smaller substrates like benzaldehyde or phthalazine. Increases catalytic efficiency with bulkier substrates like phenanthridine or more charged substrates like N1-methylnicotinamide." evidence="8">
    <original>Y</original>
    <variation>M</variation>
    <location>
        <position position="885"/>
    </location>
</feature>
<feature type="mutagenesis site" description="No effect on substrate affinity but decreases catalytic efficiency for smaller substrates like benzaldehyde or phthalazine. Increases substrate affinity and activity for bulkier substrates like phenanthridine." evidence="8">
    <original>K</original>
    <variation>H</variation>
    <location>
        <position position="889"/>
    </location>
</feature>
<feature type="mutagenesis site" description="Loss of activity with different N-heterocyclic compounds as substrates. 60% reduction of activity with benzaldehyde." evidence="8">
    <original>E</original>
    <variation>Q</variation>
    <location>
        <position position="1266"/>
    </location>
</feature>
<feature type="sequence conflict" description="In Ref. 1; AAL36596." evidence="9" ref="1">
    <original>A</original>
    <variation>T</variation>
    <location>
        <position position="308"/>
    </location>
</feature>
<feature type="sequence conflict" description="In Ref. 4; AAI38877." evidence="9" ref="4">
    <original>K</original>
    <variation>R</variation>
    <location>
        <position position="541"/>
    </location>
</feature>
<feature type="strand" evidence="12">
    <location>
        <begin position="10"/>
        <end position="14"/>
    </location>
</feature>
<feature type="strand" evidence="12">
    <location>
        <begin position="17"/>
        <end position="23"/>
    </location>
</feature>
<feature type="helix" evidence="12">
    <location>
        <begin position="30"/>
        <end position="36"/>
    </location>
</feature>
<feature type="strand" evidence="12">
    <location>
        <begin position="48"/>
        <end position="52"/>
    </location>
</feature>
<feature type="strand" evidence="12">
    <location>
        <begin position="56"/>
        <end position="63"/>
    </location>
</feature>
<feature type="turn" evidence="12">
    <location>
        <begin position="64"/>
        <end position="67"/>
    </location>
</feature>
<feature type="strand" evidence="12">
    <location>
        <begin position="68"/>
        <end position="75"/>
    </location>
</feature>
<feature type="turn" evidence="12">
    <location>
        <begin position="76"/>
        <end position="78"/>
    </location>
</feature>
<feature type="helix" evidence="12">
    <location>
        <begin position="81"/>
        <end position="83"/>
    </location>
</feature>
<feature type="strand" evidence="12">
    <location>
        <begin position="88"/>
        <end position="90"/>
    </location>
</feature>
<feature type="helix" evidence="12">
    <location>
        <begin position="92"/>
        <end position="95"/>
    </location>
</feature>
<feature type="helix" evidence="12">
    <location>
        <begin position="104"/>
        <end position="111"/>
    </location>
</feature>
<feature type="helix" evidence="12">
    <location>
        <begin position="121"/>
        <end position="134"/>
    </location>
</feature>
<feature type="helix" evidence="12">
    <location>
        <begin position="140"/>
        <end position="147"/>
    </location>
</feature>
<feature type="strand" evidence="12">
    <location>
        <begin position="153"/>
        <end position="155"/>
    </location>
</feature>
<feature type="helix" evidence="12">
    <location>
        <begin position="158"/>
        <end position="165"/>
    </location>
</feature>
<feature type="helix" evidence="12">
    <location>
        <begin position="204"/>
        <end position="206"/>
    </location>
</feature>
<feature type="helix" evidence="12">
    <location>
        <begin position="212"/>
        <end position="214"/>
    </location>
</feature>
<feature type="helix" evidence="12">
    <location>
        <begin position="220"/>
        <end position="226"/>
    </location>
</feature>
<feature type="strand" evidence="12">
    <location>
        <begin position="234"/>
        <end position="237"/>
    </location>
</feature>
<feature type="strand" evidence="12">
    <location>
        <begin position="242"/>
        <end position="245"/>
    </location>
</feature>
<feature type="helix" evidence="12">
    <location>
        <begin position="249"/>
        <end position="258"/>
    </location>
</feature>
<feature type="helix" evidence="12">
    <location>
        <begin position="271"/>
        <end position="275"/>
    </location>
</feature>
<feature type="strand" evidence="12">
    <location>
        <begin position="283"/>
        <end position="286"/>
    </location>
</feature>
<feature type="helix" evidence="12">
    <location>
        <begin position="292"/>
        <end position="294"/>
    </location>
</feature>
<feature type="strand" evidence="12">
    <location>
        <begin position="303"/>
        <end position="307"/>
    </location>
</feature>
<feature type="helix" evidence="12">
    <location>
        <begin position="312"/>
        <end position="323"/>
    </location>
</feature>
<feature type="turn" evidence="12">
    <location>
        <begin position="328"/>
        <end position="330"/>
    </location>
</feature>
<feature type="helix" evidence="12">
    <location>
        <begin position="334"/>
        <end position="341"/>
    </location>
</feature>
<feature type="helix" evidence="12">
    <location>
        <begin position="347"/>
        <end position="352"/>
    </location>
</feature>
<feature type="helix" evidence="12">
    <location>
        <begin position="355"/>
        <end position="360"/>
    </location>
</feature>
<feature type="helix" evidence="12">
    <location>
        <begin position="369"/>
        <end position="372"/>
    </location>
</feature>
<feature type="helix" evidence="12">
    <location>
        <begin position="373"/>
        <end position="375"/>
    </location>
</feature>
<feature type="strand" evidence="12">
    <location>
        <begin position="378"/>
        <end position="382"/>
    </location>
</feature>
<feature type="strand" evidence="12">
    <location>
        <begin position="387"/>
        <end position="391"/>
    </location>
</feature>
<feature type="turn" evidence="12">
    <location>
        <begin position="394"/>
        <end position="396"/>
    </location>
</feature>
<feature type="strand" evidence="12">
    <location>
        <begin position="410"/>
        <end position="417"/>
    </location>
</feature>
<feature type="strand" evidence="12">
    <location>
        <begin position="423"/>
        <end position="430"/>
    </location>
</feature>
<feature type="strand" evidence="12">
    <location>
        <begin position="432"/>
        <end position="437"/>
    </location>
</feature>
<feature type="strand" evidence="12">
    <location>
        <begin position="440"/>
        <end position="448"/>
    </location>
</feature>
<feature type="strand" evidence="12">
    <location>
        <begin position="457"/>
        <end position="469"/>
    </location>
</feature>
<feature type="helix" evidence="12">
    <location>
        <begin position="478"/>
        <end position="480"/>
    </location>
</feature>
<feature type="helix" evidence="12">
    <location>
        <begin position="490"/>
        <end position="503"/>
    </location>
</feature>
<feature type="helix" evidence="12">
    <location>
        <begin position="512"/>
        <end position="537"/>
    </location>
</feature>
<feature type="helix" evidence="12">
    <location>
        <begin position="547"/>
        <end position="550"/>
    </location>
</feature>
<feature type="helix" evidence="12">
    <location>
        <begin position="551"/>
        <end position="553"/>
    </location>
</feature>
<feature type="helix" evidence="12">
    <location>
        <begin position="589"/>
        <end position="593"/>
    </location>
</feature>
<feature type="strand" evidence="12">
    <location>
        <begin position="610"/>
        <end position="616"/>
    </location>
</feature>
<feature type="strand" evidence="12">
    <location>
        <begin position="618"/>
        <end position="628"/>
    </location>
</feature>
<feature type="helix" evidence="12">
    <location>
        <begin position="630"/>
        <end position="634"/>
    </location>
</feature>
<feature type="strand" evidence="12">
    <location>
        <begin position="638"/>
        <end position="642"/>
    </location>
</feature>
<feature type="helix" evidence="12">
    <location>
        <begin position="644"/>
        <end position="646"/>
    </location>
</feature>
<feature type="strand" evidence="12">
    <location>
        <begin position="662"/>
        <end position="664"/>
    </location>
</feature>
<feature type="strand" evidence="12">
    <location>
        <begin position="670"/>
        <end position="678"/>
    </location>
</feature>
<feature type="helix" evidence="12">
    <location>
        <begin position="679"/>
        <end position="686"/>
    </location>
</feature>
<feature type="strand" evidence="12">
    <location>
        <begin position="690"/>
        <end position="695"/>
    </location>
</feature>
<feature type="helix" evidence="12">
    <location>
        <begin position="703"/>
        <end position="708"/>
    </location>
</feature>
<feature type="strand" evidence="12">
    <location>
        <begin position="713"/>
        <end position="722"/>
    </location>
</feature>
<feature type="helix" evidence="12">
    <location>
        <begin position="724"/>
        <end position="727"/>
    </location>
</feature>
<feature type="strand" evidence="12">
    <location>
        <begin position="730"/>
        <end position="741"/>
    </location>
</feature>
<feature type="strand" evidence="12">
    <location>
        <begin position="753"/>
        <end position="758"/>
    </location>
</feature>
<feature type="strand" evidence="12">
    <location>
        <begin position="765"/>
        <end position="769"/>
    </location>
</feature>
<feature type="helix" evidence="12">
    <location>
        <begin position="774"/>
        <end position="785"/>
    </location>
</feature>
<feature type="helix" evidence="12">
    <location>
        <begin position="789"/>
        <end position="791"/>
    </location>
</feature>
<feature type="strand" evidence="12">
    <location>
        <begin position="792"/>
        <end position="797"/>
    </location>
</feature>
<feature type="turn" evidence="12">
    <location>
        <begin position="803"/>
        <end position="806"/>
    </location>
</feature>
<feature type="helix" evidence="12">
    <location>
        <begin position="809"/>
        <end position="824"/>
    </location>
</feature>
<feature type="strand" evidence="12">
    <location>
        <begin position="828"/>
        <end position="831"/>
    </location>
</feature>
<feature type="helix" evidence="12">
    <location>
        <begin position="834"/>
        <end position="840"/>
    </location>
</feature>
<feature type="strand" evidence="12">
    <location>
        <begin position="847"/>
        <end position="855"/>
    </location>
</feature>
<feature type="strand" evidence="12">
    <location>
        <begin position="861"/>
        <end position="871"/>
    </location>
</feature>
<feature type="helix" evidence="12">
    <location>
        <begin position="879"/>
        <end position="889"/>
    </location>
</feature>
<feature type="turn" evidence="12">
    <location>
        <begin position="890"/>
        <end position="893"/>
    </location>
</feature>
<feature type="strand" evidence="12">
    <location>
        <begin position="897"/>
        <end position="906"/>
    </location>
</feature>
<feature type="turn" evidence="12">
    <location>
        <begin position="917"/>
        <end position="920"/>
    </location>
</feature>
<feature type="helix" evidence="12">
    <location>
        <begin position="921"/>
        <end position="939"/>
    </location>
</feature>
<feature type="helix" evidence="12">
    <location>
        <begin position="943"/>
        <end position="950"/>
    </location>
</feature>
<feature type="helix" evidence="12">
    <location>
        <begin position="969"/>
        <end position="979"/>
    </location>
</feature>
<feature type="helix" evidence="12">
    <location>
        <begin position="982"/>
        <end position="995"/>
    </location>
</feature>
<feature type="strand" evidence="12">
    <location>
        <begin position="997"/>
        <end position="1011"/>
    </location>
</feature>
<feature type="helix" evidence="12">
    <location>
        <begin position="1017"/>
        <end position="1020"/>
    </location>
</feature>
<feature type="strand" evidence="12">
    <location>
        <begin position="1022"/>
        <end position="1028"/>
    </location>
</feature>
<feature type="strand" evidence="12">
    <location>
        <begin position="1034"/>
        <end position="1036"/>
    </location>
</feature>
<feature type="strand" evidence="12">
    <location>
        <begin position="1043"/>
        <end position="1045"/>
    </location>
</feature>
<feature type="helix" evidence="12">
    <location>
        <begin position="1047"/>
        <end position="1059"/>
    </location>
</feature>
<feature type="helix" evidence="12">
    <location>
        <begin position="1063"/>
        <end position="1065"/>
    </location>
</feature>
<feature type="strand" evidence="12">
    <location>
        <begin position="1066"/>
        <end position="1068"/>
    </location>
</feature>
<feature type="turn" evidence="12">
    <location>
        <begin position="1073"/>
        <end position="1075"/>
    </location>
</feature>
<feature type="helix" evidence="12">
    <location>
        <begin position="1087"/>
        <end position="1105"/>
    </location>
</feature>
<feature type="turn" evidence="12">
    <location>
        <begin position="1106"/>
        <end position="1108"/>
    </location>
</feature>
<feature type="helix" evidence="12">
    <location>
        <begin position="1109"/>
        <end position="1112"/>
    </location>
</feature>
<feature type="helix" evidence="12">
    <location>
        <begin position="1118"/>
        <end position="1127"/>
    </location>
</feature>
<feature type="strand" evidence="12">
    <location>
        <begin position="1133"/>
        <end position="1138"/>
    </location>
</feature>
<feature type="strand" evidence="12">
    <location>
        <begin position="1144"/>
        <end position="1146"/>
    </location>
</feature>
<feature type="turn" evidence="12">
    <location>
        <begin position="1147"/>
        <end position="1150"/>
    </location>
</feature>
<feature type="strand" evidence="12">
    <location>
        <begin position="1151"/>
        <end position="1153"/>
    </location>
</feature>
<feature type="strand" evidence="12">
    <location>
        <begin position="1158"/>
        <end position="1169"/>
    </location>
</feature>
<feature type="turn" evidence="12">
    <location>
        <begin position="1171"/>
        <end position="1173"/>
    </location>
</feature>
<feature type="strand" evidence="12">
    <location>
        <begin position="1176"/>
        <end position="1185"/>
    </location>
</feature>
<feature type="helix" evidence="12">
    <location>
        <begin position="1193"/>
        <end position="1212"/>
    </location>
</feature>
<feature type="turn" evidence="12">
    <location>
        <begin position="1229"/>
        <end position="1231"/>
    </location>
</feature>
<feature type="turn" evidence="12">
    <location>
        <begin position="1237"/>
        <end position="1239"/>
    </location>
</feature>
<feature type="strand" evidence="12">
    <location>
        <begin position="1242"/>
        <end position="1248"/>
    </location>
</feature>
<feature type="helix" evidence="12">
    <location>
        <begin position="1258"/>
        <end position="1260"/>
    </location>
</feature>
<feature type="helix" evidence="12">
    <location>
        <begin position="1267"/>
        <end position="1272"/>
    </location>
</feature>
<feature type="helix" evidence="12">
    <location>
        <begin position="1273"/>
        <end position="1289"/>
    </location>
</feature>
<feature type="helix" evidence="12">
    <location>
        <begin position="1304"/>
        <end position="1310"/>
    </location>
</feature>
<feature type="turn" evidence="12">
    <location>
        <begin position="1314"/>
        <end position="1316"/>
    </location>
</feature>
<name>AOXC_MOUSE</name>